<accession>Q9SHU5</accession>
<name>ARF4_ARATH</name>
<evidence type="ECO:0000250" key="1"/>
<evidence type="ECO:0000255" key="2"/>
<evidence type="ECO:0000305" key="3"/>
<reference key="1">
    <citation type="journal article" date="1999" name="Nature">
        <title>Sequence and analysis of chromosome 2 of the plant Arabidopsis thaliana.</title>
        <authorList>
            <person name="Lin X."/>
            <person name="Kaul S."/>
            <person name="Rounsley S.D."/>
            <person name="Shea T.P."/>
            <person name="Benito M.-I."/>
            <person name="Town C.D."/>
            <person name="Fujii C.Y."/>
            <person name="Mason T.M."/>
            <person name="Bowman C.L."/>
            <person name="Barnstead M.E."/>
            <person name="Feldblyum T.V."/>
            <person name="Buell C.R."/>
            <person name="Ketchum K.A."/>
            <person name="Lee J.J."/>
            <person name="Ronning C.M."/>
            <person name="Koo H.L."/>
            <person name="Moffat K.S."/>
            <person name="Cronin L.A."/>
            <person name="Shen M."/>
            <person name="Pai G."/>
            <person name="Van Aken S."/>
            <person name="Umayam L."/>
            <person name="Tallon L.J."/>
            <person name="Gill J.E."/>
            <person name="Adams M.D."/>
            <person name="Carrera A.J."/>
            <person name="Creasy T.H."/>
            <person name="Goodman H.M."/>
            <person name="Somerville C.R."/>
            <person name="Copenhaver G.P."/>
            <person name="Preuss D."/>
            <person name="Nierman W.C."/>
            <person name="White O."/>
            <person name="Eisen J.A."/>
            <person name="Salzberg S.L."/>
            <person name="Fraser C.M."/>
            <person name="Venter J.C."/>
        </authorList>
    </citation>
    <scope>NUCLEOTIDE SEQUENCE [LARGE SCALE GENOMIC DNA]</scope>
    <source>
        <strain>cv. Columbia</strain>
    </source>
</reference>
<reference key="2">
    <citation type="journal article" date="2017" name="Plant J.">
        <title>Araport11: a complete reannotation of the Arabidopsis thaliana reference genome.</title>
        <authorList>
            <person name="Cheng C.Y."/>
            <person name="Krishnakumar V."/>
            <person name="Chan A.P."/>
            <person name="Thibaud-Nissen F."/>
            <person name="Schobel S."/>
            <person name="Town C.D."/>
        </authorList>
    </citation>
    <scope>GENOME REANNOTATION</scope>
    <source>
        <strain>cv. Columbia</strain>
    </source>
</reference>
<reference key="3">
    <citation type="journal article" date="2003" name="Science">
        <title>Empirical analysis of transcriptional activity in the Arabidopsis genome.</title>
        <authorList>
            <person name="Yamada K."/>
            <person name="Lim J."/>
            <person name="Dale J.M."/>
            <person name="Chen H."/>
            <person name="Shinn P."/>
            <person name="Palm C.J."/>
            <person name="Southwick A.M."/>
            <person name="Wu H.C."/>
            <person name="Kim C.J."/>
            <person name="Nguyen M."/>
            <person name="Pham P.K."/>
            <person name="Cheuk R.F."/>
            <person name="Karlin-Newmann G."/>
            <person name="Liu S.X."/>
            <person name="Lam B."/>
            <person name="Sakano H."/>
            <person name="Wu T."/>
            <person name="Yu G."/>
            <person name="Miranda M."/>
            <person name="Quach H.L."/>
            <person name="Tripp M."/>
            <person name="Chang C.H."/>
            <person name="Lee J.M."/>
            <person name="Toriumi M.J."/>
            <person name="Chan M.M."/>
            <person name="Tang C.C."/>
            <person name="Onodera C.S."/>
            <person name="Deng J.M."/>
            <person name="Akiyama K."/>
            <person name="Ansari Y."/>
            <person name="Arakawa T."/>
            <person name="Banh J."/>
            <person name="Banno F."/>
            <person name="Bowser L."/>
            <person name="Brooks S.Y."/>
            <person name="Carninci P."/>
            <person name="Chao Q."/>
            <person name="Choy N."/>
            <person name="Enju A."/>
            <person name="Goldsmith A.D."/>
            <person name="Gurjal M."/>
            <person name="Hansen N.F."/>
            <person name="Hayashizaki Y."/>
            <person name="Johnson-Hopson C."/>
            <person name="Hsuan V.W."/>
            <person name="Iida K."/>
            <person name="Karnes M."/>
            <person name="Khan S."/>
            <person name="Koesema E."/>
            <person name="Ishida J."/>
            <person name="Jiang P.X."/>
            <person name="Jones T."/>
            <person name="Kawai J."/>
            <person name="Kamiya A."/>
            <person name="Meyers C."/>
            <person name="Nakajima M."/>
            <person name="Narusaka M."/>
            <person name="Seki M."/>
            <person name="Sakurai T."/>
            <person name="Satou M."/>
            <person name="Tamse R."/>
            <person name="Vaysberg M."/>
            <person name="Wallender E.K."/>
            <person name="Wong C."/>
            <person name="Yamamura Y."/>
            <person name="Yuan S."/>
            <person name="Shinozaki K."/>
            <person name="Davis R.W."/>
            <person name="Theologis A."/>
            <person name="Ecker J.R."/>
        </authorList>
    </citation>
    <scope>NUCLEOTIDE SEQUENCE [LARGE SCALE MRNA]</scope>
    <source>
        <strain>cv. Columbia</strain>
    </source>
</reference>
<dbReference type="EMBL" id="AC007267">
    <property type="protein sequence ID" value="AAD26902.1"/>
    <property type="molecule type" value="Genomic_DNA"/>
</dbReference>
<dbReference type="EMBL" id="CP002685">
    <property type="protein sequence ID" value="AEC06385.1"/>
    <property type="molecule type" value="Genomic_DNA"/>
</dbReference>
<dbReference type="EMBL" id="AY054470">
    <property type="protein sequence ID" value="AAK96662.1"/>
    <property type="molecule type" value="mRNA"/>
</dbReference>
<dbReference type="EMBL" id="AY093273">
    <property type="protein sequence ID" value="AAM13272.1"/>
    <property type="molecule type" value="mRNA"/>
</dbReference>
<dbReference type="PIR" id="D84527">
    <property type="entry name" value="D84527"/>
</dbReference>
<dbReference type="SMR" id="Q9SHU5"/>
<dbReference type="BioGRID" id="1379">
    <property type="interactions" value="3"/>
</dbReference>
<dbReference type="FunCoup" id="Q9SHU5">
    <property type="interactions" value="160"/>
</dbReference>
<dbReference type="IntAct" id="Q9SHU5">
    <property type="interactions" value="3"/>
</dbReference>
<dbReference type="STRING" id="3702.Q9SHU5"/>
<dbReference type="iPTMnet" id="Q9SHU5"/>
<dbReference type="PaxDb" id="3702-AT2G15310.1"/>
<dbReference type="ProteomicsDB" id="246957"/>
<dbReference type="EnsemblPlants" id="AT2G15310.1">
    <property type="protein sequence ID" value="AT2G15310.1"/>
    <property type="gene ID" value="AT2G15310"/>
</dbReference>
<dbReference type="GeneID" id="816020"/>
<dbReference type="Gramene" id="AT2G15310.1">
    <property type="protein sequence ID" value="AT2G15310.1"/>
    <property type="gene ID" value="AT2G15310"/>
</dbReference>
<dbReference type="KEGG" id="ath:AT2G15310"/>
<dbReference type="Araport" id="AT2G15310"/>
<dbReference type="TAIR" id="AT2G15310">
    <property type="gene designation" value="ARFB1A"/>
</dbReference>
<dbReference type="eggNOG" id="KOG0070">
    <property type="taxonomic scope" value="Eukaryota"/>
</dbReference>
<dbReference type="HOGENOM" id="CLU_040729_9_3_1"/>
<dbReference type="InParanoid" id="Q9SHU5"/>
<dbReference type="OMA" id="WLSTTIP"/>
<dbReference type="PhylomeDB" id="Q9SHU5"/>
<dbReference type="PRO" id="PR:Q9SHU5"/>
<dbReference type="Proteomes" id="UP000006548">
    <property type="component" value="Chromosome 2"/>
</dbReference>
<dbReference type="ExpressionAtlas" id="Q9SHU5">
    <property type="expression patterns" value="baseline and differential"/>
</dbReference>
<dbReference type="GO" id="GO:0005794">
    <property type="term" value="C:Golgi apparatus"/>
    <property type="evidence" value="ECO:0007669"/>
    <property type="project" value="UniProtKB-SubCell"/>
</dbReference>
<dbReference type="GO" id="GO:0005525">
    <property type="term" value="F:GTP binding"/>
    <property type="evidence" value="ECO:0000250"/>
    <property type="project" value="TAIR"/>
</dbReference>
<dbReference type="GO" id="GO:0003924">
    <property type="term" value="F:GTPase activity"/>
    <property type="evidence" value="ECO:0007669"/>
    <property type="project" value="InterPro"/>
</dbReference>
<dbReference type="GO" id="GO:0015031">
    <property type="term" value="P:protein transport"/>
    <property type="evidence" value="ECO:0007669"/>
    <property type="project" value="UniProtKB-KW"/>
</dbReference>
<dbReference type="GO" id="GO:0016192">
    <property type="term" value="P:vesicle-mediated transport"/>
    <property type="evidence" value="ECO:0007669"/>
    <property type="project" value="UniProtKB-KW"/>
</dbReference>
<dbReference type="FunFam" id="3.40.50.300:FF:003500">
    <property type="entry name" value="ADP-ribosylation factor 1"/>
    <property type="match status" value="1"/>
</dbReference>
<dbReference type="Gene3D" id="3.40.50.300">
    <property type="entry name" value="P-loop containing nucleotide triphosphate hydrolases"/>
    <property type="match status" value="1"/>
</dbReference>
<dbReference type="InterPro" id="IPR027417">
    <property type="entry name" value="P-loop_NTPase"/>
</dbReference>
<dbReference type="InterPro" id="IPR005225">
    <property type="entry name" value="Small_GTP-bd"/>
</dbReference>
<dbReference type="InterPro" id="IPR024156">
    <property type="entry name" value="Small_GTPase_ARF"/>
</dbReference>
<dbReference type="InterPro" id="IPR006689">
    <property type="entry name" value="Small_GTPase_ARF/SAR"/>
</dbReference>
<dbReference type="NCBIfam" id="TIGR00231">
    <property type="entry name" value="small_GTP"/>
    <property type="match status" value="1"/>
</dbReference>
<dbReference type="PANTHER" id="PTHR11711">
    <property type="entry name" value="ADP RIBOSYLATION FACTOR-RELATED"/>
    <property type="match status" value="1"/>
</dbReference>
<dbReference type="Pfam" id="PF00025">
    <property type="entry name" value="Arf"/>
    <property type="match status" value="1"/>
</dbReference>
<dbReference type="PRINTS" id="PR00328">
    <property type="entry name" value="SAR1GTPBP"/>
</dbReference>
<dbReference type="SMART" id="SM00177">
    <property type="entry name" value="ARF"/>
    <property type="match status" value="1"/>
</dbReference>
<dbReference type="SMART" id="SM00175">
    <property type="entry name" value="RAB"/>
    <property type="match status" value="1"/>
</dbReference>
<dbReference type="SMART" id="SM00178">
    <property type="entry name" value="SAR"/>
    <property type="match status" value="1"/>
</dbReference>
<dbReference type="SUPFAM" id="SSF52540">
    <property type="entry name" value="P-loop containing nucleoside triphosphate hydrolases"/>
    <property type="match status" value="1"/>
</dbReference>
<dbReference type="PROSITE" id="PS51417">
    <property type="entry name" value="ARF"/>
    <property type="match status" value="1"/>
</dbReference>
<organism>
    <name type="scientific">Arabidopsis thaliana</name>
    <name type="common">Mouse-ear cress</name>
    <dbReference type="NCBI Taxonomy" id="3702"/>
    <lineage>
        <taxon>Eukaryota</taxon>
        <taxon>Viridiplantae</taxon>
        <taxon>Streptophyta</taxon>
        <taxon>Embryophyta</taxon>
        <taxon>Tracheophyta</taxon>
        <taxon>Spermatophyta</taxon>
        <taxon>Magnoliopsida</taxon>
        <taxon>eudicotyledons</taxon>
        <taxon>Gunneridae</taxon>
        <taxon>Pentapetalae</taxon>
        <taxon>rosids</taxon>
        <taxon>malvids</taxon>
        <taxon>Brassicales</taxon>
        <taxon>Brassicaceae</taxon>
        <taxon>Camelineae</taxon>
        <taxon>Arabidopsis</taxon>
    </lineage>
</organism>
<protein>
    <recommendedName>
        <fullName>Probable ADP-ribosylation factor At2g15310</fullName>
    </recommendedName>
</protein>
<proteinExistence type="evidence at transcript level"/>
<gene>
    <name type="ordered locus">At2g15310</name>
    <name type="ORF">F27O10.4</name>
</gene>
<comment type="function">
    <text evidence="1">GTP-binding protein involved in protein trafficking; may modulate vesicle budding and uncoating within the Golgi apparatus.</text>
</comment>
<comment type="subcellular location">
    <subcellularLocation>
        <location evidence="1">Golgi apparatus</location>
    </subcellularLocation>
</comment>
<comment type="similarity">
    <text evidence="3">Belongs to the small GTPase superfamily. Arf family.</text>
</comment>
<sequence>MGARFSRIAKRFLPKSKVRILMVGLDGSGKTTILYKLKLGEVVTTVPTIGFNLETVEYKGINFTVWDIGGQEKIRKLWRHYFQNAQGLIFVVDSSDSERLSEARNELHRILTDNELEGACVLVFANKQDSRNALPVAEVANKLGLHSLSKRCWLIQGTSAISGQGLYEGLEWLSTTIPNKPERSTSVSSFRSDSYERKLVRGPRY</sequence>
<keyword id="KW-0931">ER-Golgi transport</keyword>
<keyword id="KW-0333">Golgi apparatus</keyword>
<keyword id="KW-0342">GTP-binding</keyword>
<keyword id="KW-0449">Lipoprotein</keyword>
<keyword id="KW-0519">Myristate</keyword>
<keyword id="KW-0547">Nucleotide-binding</keyword>
<keyword id="KW-0653">Protein transport</keyword>
<keyword id="KW-1185">Reference proteome</keyword>
<keyword id="KW-0813">Transport</keyword>
<feature type="initiator methionine" description="Removed" evidence="2">
    <location>
        <position position="1"/>
    </location>
</feature>
<feature type="chain" id="PRO_0000207429" description="Probable ADP-ribosylation factor At2g15310">
    <location>
        <begin position="2"/>
        <end position="205"/>
    </location>
</feature>
<feature type="binding site" evidence="1">
    <location>
        <begin position="24"/>
        <end position="31"/>
    </location>
    <ligand>
        <name>GTP</name>
        <dbReference type="ChEBI" id="CHEBI:37565"/>
    </ligand>
</feature>
<feature type="binding site" evidence="1">
    <location>
        <begin position="67"/>
        <end position="71"/>
    </location>
    <ligand>
        <name>GTP</name>
        <dbReference type="ChEBI" id="CHEBI:37565"/>
    </ligand>
</feature>
<feature type="binding site" evidence="1">
    <location>
        <begin position="126"/>
        <end position="129"/>
    </location>
    <ligand>
        <name>GTP</name>
        <dbReference type="ChEBI" id="CHEBI:37565"/>
    </ligand>
</feature>
<feature type="lipid moiety-binding region" description="N-myristoyl glycine" evidence="2">
    <location>
        <position position="2"/>
    </location>
</feature>